<sequence length="273" mass="28146">MPLHRREAAPAKLNLTLHVTGRRVDGYHLLDSLVVFLDLGDVVTIAPGPLSLSLTGPFAPGLAAEPDNLCLRAARLAGREARITLEKNLPVASGIGGGSADAAAVLRALDASPRRPEALGADVPVCLASRPVRMRGVGEILAPLPALPELNVLLVNPGRGLSTPAVFKALARHDNPPMPEPLPDFPDAQALIGFLHECRNDLEAPAIALMPGIADCLAALRSAGAQLARMSGSGATCFGLFASAAEAQAARARIAGTNPGWWVAASGLAPAKH</sequence>
<reference key="1">
    <citation type="submission" date="2006-12" db="EMBL/GenBank/DDBJ databases">
        <title>Complete sequence of chromosome 1 of Paracoccus denitrificans PD1222.</title>
        <authorList>
            <person name="Copeland A."/>
            <person name="Lucas S."/>
            <person name="Lapidus A."/>
            <person name="Barry K."/>
            <person name="Detter J.C."/>
            <person name="Glavina del Rio T."/>
            <person name="Hammon N."/>
            <person name="Israni S."/>
            <person name="Dalin E."/>
            <person name="Tice H."/>
            <person name="Pitluck S."/>
            <person name="Munk A.C."/>
            <person name="Brettin T."/>
            <person name="Bruce D."/>
            <person name="Han C."/>
            <person name="Tapia R."/>
            <person name="Gilna P."/>
            <person name="Schmutz J."/>
            <person name="Larimer F."/>
            <person name="Land M."/>
            <person name="Hauser L."/>
            <person name="Kyrpides N."/>
            <person name="Lykidis A."/>
            <person name="Spiro S."/>
            <person name="Richardson D.J."/>
            <person name="Moir J.W.B."/>
            <person name="Ferguson S.J."/>
            <person name="van Spanning R.J.M."/>
            <person name="Richardson P."/>
        </authorList>
    </citation>
    <scope>NUCLEOTIDE SEQUENCE [LARGE SCALE GENOMIC DNA]</scope>
    <source>
        <strain>Pd 1222</strain>
    </source>
</reference>
<proteinExistence type="inferred from homology"/>
<organism>
    <name type="scientific">Paracoccus denitrificans (strain Pd 1222)</name>
    <dbReference type="NCBI Taxonomy" id="318586"/>
    <lineage>
        <taxon>Bacteria</taxon>
        <taxon>Pseudomonadati</taxon>
        <taxon>Pseudomonadota</taxon>
        <taxon>Alphaproteobacteria</taxon>
        <taxon>Rhodobacterales</taxon>
        <taxon>Paracoccaceae</taxon>
        <taxon>Paracoccus</taxon>
    </lineage>
</organism>
<accession>A1AZ43</accession>
<keyword id="KW-0067">ATP-binding</keyword>
<keyword id="KW-0414">Isoprene biosynthesis</keyword>
<keyword id="KW-0418">Kinase</keyword>
<keyword id="KW-0547">Nucleotide-binding</keyword>
<keyword id="KW-1185">Reference proteome</keyword>
<keyword id="KW-0808">Transferase</keyword>
<dbReference type="EC" id="2.7.1.148" evidence="1"/>
<dbReference type="EMBL" id="CP000489">
    <property type="protein sequence ID" value="ABL68537.1"/>
    <property type="molecule type" value="Genomic_DNA"/>
</dbReference>
<dbReference type="RefSeq" id="WP_011746770.1">
    <property type="nucleotide sequence ID" value="NC_008686.1"/>
</dbReference>
<dbReference type="SMR" id="A1AZ43"/>
<dbReference type="STRING" id="318586.Pden_0423"/>
<dbReference type="EnsemblBacteria" id="ABL68537">
    <property type="protein sequence ID" value="ABL68537"/>
    <property type="gene ID" value="Pden_0423"/>
</dbReference>
<dbReference type="GeneID" id="93451647"/>
<dbReference type="KEGG" id="pde:Pden_0423"/>
<dbReference type="eggNOG" id="COG1947">
    <property type="taxonomic scope" value="Bacteria"/>
</dbReference>
<dbReference type="HOGENOM" id="CLU_053057_1_0_5"/>
<dbReference type="OrthoDB" id="9809438at2"/>
<dbReference type="UniPathway" id="UPA00056">
    <property type="reaction ID" value="UER00094"/>
</dbReference>
<dbReference type="Proteomes" id="UP000000361">
    <property type="component" value="Chromosome 1"/>
</dbReference>
<dbReference type="GO" id="GO:0050515">
    <property type="term" value="F:4-(cytidine 5'-diphospho)-2-C-methyl-D-erythritol kinase activity"/>
    <property type="evidence" value="ECO:0007669"/>
    <property type="project" value="UniProtKB-UniRule"/>
</dbReference>
<dbReference type="GO" id="GO:0005524">
    <property type="term" value="F:ATP binding"/>
    <property type="evidence" value="ECO:0007669"/>
    <property type="project" value="UniProtKB-UniRule"/>
</dbReference>
<dbReference type="GO" id="GO:0019288">
    <property type="term" value="P:isopentenyl diphosphate biosynthetic process, methylerythritol 4-phosphate pathway"/>
    <property type="evidence" value="ECO:0007669"/>
    <property type="project" value="UniProtKB-UniRule"/>
</dbReference>
<dbReference type="GO" id="GO:0016114">
    <property type="term" value="P:terpenoid biosynthetic process"/>
    <property type="evidence" value="ECO:0007669"/>
    <property type="project" value="InterPro"/>
</dbReference>
<dbReference type="Gene3D" id="3.30.230.10">
    <property type="match status" value="1"/>
</dbReference>
<dbReference type="Gene3D" id="3.30.70.890">
    <property type="entry name" value="GHMP kinase, C-terminal domain"/>
    <property type="match status" value="1"/>
</dbReference>
<dbReference type="HAMAP" id="MF_00061">
    <property type="entry name" value="IspE"/>
    <property type="match status" value="1"/>
</dbReference>
<dbReference type="InterPro" id="IPR013750">
    <property type="entry name" value="GHMP_kinase_C_dom"/>
</dbReference>
<dbReference type="InterPro" id="IPR036554">
    <property type="entry name" value="GHMP_kinase_C_sf"/>
</dbReference>
<dbReference type="InterPro" id="IPR006204">
    <property type="entry name" value="GHMP_kinase_N_dom"/>
</dbReference>
<dbReference type="InterPro" id="IPR004424">
    <property type="entry name" value="IspE"/>
</dbReference>
<dbReference type="InterPro" id="IPR020568">
    <property type="entry name" value="Ribosomal_Su5_D2-typ_SF"/>
</dbReference>
<dbReference type="InterPro" id="IPR014721">
    <property type="entry name" value="Ribsml_uS5_D2-typ_fold_subgr"/>
</dbReference>
<dbReference type="NCBIfam" id="TIGR00154">
    <property type="entry name" value="ispE"/>
    <property type="match status" value="1"/>
</dbReference>
<dbReference type="NCBIfam" id="NF011202">
    <property type="entry name" value="PRK14608.1"/>
    <property type="match status" value="1"/>
</dbReference>
<dbReference type="PANTHER" id="PTHR43527">
    <property type="entry name" value="4-DIPHOSPHOCYTIDYL-2-C-METHYL-D-ERYTHRITOL KINASE, CHLOROPLASTIC"/>
    <property type="match status" value="1"/>
</dbReference>
<dbReference type="PANTHER" id="PTHR43527:SF2">
    <property type="entry name" value="4-DIPHOSPHOCYTIDYL-2-C-METHYL-D-ERYTHRITOL KINASE, CHLOROPLASTIC"/>
    <property type="match status" value="1"/>
</dbReference>
<dbReference type="Pfam" id="PF08544">
    <property type="entry name" value="GHMP_kinases_C"/>
    <property type="match status" value="1"/>
</dbReference>
<dbReference type="Pfam" id="PF00288">
    <property type="entry name" value="GHMP_kinases_N"/>
    <property type="match status" value="1"/>
</dbReference>
<dbReference type="PIRSF" id="PIRSF010376">
    <property type="entry name" value="IspE"/>
    <property type="match status" value="1"/>
</dbReference>
<dbReference type="SUPFAM" id="SSF55060">
    <property type="entry name" value="GHMP Kinase, C-terminal domain"/>
    <property type="match status" value="1"/>
</dbReference>
<dbReference type="SUPFAM" id="SSF54211">
    <property type="entry name" value="Ribosomal protein S5 domain 2-like"/>
    <property type="match status" value="1"/>
</dbReference>
<evidence type="ECO:0000255" key="1">
    <source>
        <dbReference type="HAMAP-Rule" id="MF_00061"/>
    </source>
</evidence>
<comment type="function">
    <text evidence="1">Catalyzes the phosphorylation of the position 2 hydroxy group of 4-diphosphocytidyl-2C-methyl-D-erythritol.</text>
</comment>
<comment type="catalytic activity">
    <reaction evidence="1">
        <text>4-CDP-2-C-methyl-D-erythritol + ATP = 4-CDP-2-C-methyl-D-erythritol 2-phosphate + ADP + H(+)</text>
        <dbReference type="Rhea" id="RHEA:18437"/>
        <dbReference type="ChEBI" id="CHEBI:15378"/>
        <dbReference type="ChEBI" id="CHEBI:30616"/>
        <dbReference type="ChEBI" id="CHEBI:57823"/>
        <dbReference type="ChEBI" id="CHEBI:57919"/>
        <dbReference type="ChEBI" id="CHEBI:456216"/>
        <dbReference type="EC" id="2.7.1.148"/>
    </reaction>
</comment>
<comment type="pathway">
    <text evidence="1">Isoprenoid biosynthesis; isopentenyl diphosphate biosynthesis via DXP pathway; isopentenyl diphosphate from 1-deoxy-D-xylulose 5-phosphate: step 3/6.</text>
</comment>
<comment type="similarity">
    <text evidence="1">Belongs to the GHMP kinase family. IspE subfamily.</text>
</comment>
<name>ISPE_PARDP</name>
<feature type="chain" id="PRO_0000335734" description="4-diphosphocytidyl-2-C-methyl-D-erythritol kinase">
    <location>
        <begin position="1"/>
        <end position="273"/>
    </location>
</feature>
<feature type="active site" evidence="1">
    <location>
        <position position="12"/>
    </location>
</feature>
<feature type="active site" evidence="1">
    <location>
        <position position="122"/>
    </location>
</feature>
<feature type="binding site" evidence="1">
    <location>
        <begin position="90"/>
        <end position="100"/>
    </location>
    <ligand>
        <name>ATP</name>
        <dbReference type="ChEBI" id="CHEBI:30616"/>
    </ligand>
</feature>
<gene>
    <name evidence="1" type="primary">ispE</name>
    <name type="ordered locus">Pden_0423</name>
</gene>
<protein>
    <recommendedName>
        <fullName evidence="1">4-diphosphocytidyl-2-C-methyl-D-erythritol kinase</fullName>
        <shortName evidence="1">CMK</shortName>
        <ecNumber evidence="1">2.7.1.148</ecNumber>
    </recommendedName>
    <alternativeName>
        <fullName evidence="1">4-(cytidine-5'-diphospho)-2-C-methyl-D-erythritol kinase</fullName>
    </alternativeName>
</protein>